<protein>
    <recommendedName>
        <fullName>P2Y purinoceptor 4</fullName>
        <shortName>P2Y4</shortName>
    </recommendedName>
    <alternativeName>
        <fullName>P2P</fullName>
    </alternativeName>
    <alternativeName>
        <fullName>Uridine nucleotide receptor</fullName>
        <shortName>UNR</shortName>
    </alternativeName>
</protein>
<gene>
    <name type="primary">P2RY4</name>
    <name type="synonym">NRU</name>
</gene>
<proteinExistence type="evidence at protein level"/>
<comment type="function">
    <text>Receptor for UTP and UDP coupled to G-proteins that activate a phosphatidylinositol-calcium second messenger system. Not activated by ATP or ADP.</text>
</comment>
<comment type="interaction">
    <interactant intactId="EBI-4392513">
        <id>P51582</id>
    </interactant>
    <interactant intactId="EBI-748974">
        <id>Q96CV9</id>
        <label>OPTN</label>
    </interactant>
    <organismsDiffer>false</organismsDiffer>
    <experiments>3</experiments>
</comment>
<comment type="subcellular location">
    <subcellularLocation>
        <location>Cell membrane</location>
        <topology>Multi-pass membrane protein</topology>
    </subcellularLocation>
</comment>
<comment type="tissue specificity">
    <text>Pancreas.</text>
</comment>
<comment type="PTM">
    <text evidence="3">Phosphorylation of Ser-333 and Ser-334 is a key step in agonist-dependent desensitization and loss of surface P2RY4. This phosphorylation does not involve PKC, nor other calcium activated kinases.</text>
</comment>
<comment type="similarity">
    <text evidence="2">Belongs to the G-protein coupled receptor 1 family.</text>
</comment>
<accession>P51582</accession>
<accession>Q4VBB7</accession>
<accession>Q4VBB8</accession>
<accession>Q502W2</accession>
<accession>Q5JT22</accession>
<dbReference type="EMBL" id="X91852">
    <property type="protein sequence ID" value="CAA62963.1"/>
    <property type="molecule type" value="Genomic_DNA"/>
</dbReference>
<dbReference type="EMBL" id="U40223">
    <property type="protein sequence ID" value="AAC50347.1"/>
    <property type="molecule type" value="Genomic_DNA"/>
</dbReference>
<dbReference type="EMBL" id="X96597">
    <property type="protein sequence ID" value="CAA65415.1"/>
    <property type="molecule type" value="Genomic_DNA"/>
</dbReference>
<dbReference type="EMBL" id="AL357752">
    <property type="status" value="NOT_ANNOTATED_CDS"/>
    <property type="molecule type" value="Genomic_DNA"/>
</dbReference>
<dbReference type="EMBL" id="BC095503">
    <property type="protein sequence ID" value="AAH95503.1"/>
    <property type="molecule type" value="mRNA"/>
</dbReference>
<dbReference type="EMBL" id="BC096067">
    <property type="protein sequence ID" value="AAH96067.1"/>
    <property type="molecule type" value="mRNA"/>
</dbReference>
<dbReference type="EMBL" id="BC096068">
    <property type="protein sequence ID" value="AAH96068.1"/>
    <property type="molecule type" value="mRNA"/>
</dbReference>
<dbReference type="EMBL" id="BC096069">
    <property type="protein sequence ID" value="AAH96069.1"/>
    <property type="molecule type" value="mRNA"/>
</dbReference>
<dbReference type="EMBL" id="BC096070">
    <property type="protein sequence ID" value="AAH96070.1"/>
    <property type="molecule type" value="mRNA"/>
</dbReference>
<dbReference type="CCDS" id="CCDS14398.1"/>
<dbReference type="PIR" id="S68679">
    <property type="entry name" value="S68679"/>
</dbReference>
<dbReference type="RefSeq" id="NP_002556.1">
    <property type="nucleotide sequence ID" value="NM_002565.4"/>
</dbReference>
<dbReference type="SMR" id="P51582"/>
<dbReference type="BioGRID" id="111069">
    <property type="interactions" value="19"/>
</dbReference>
<dbReference type="CORUM" id="P51582"/>
<dbReference type="FunCoup" id="P51582">
    <property type="interactions" value="664"/>
</dbReference>
<dbReference type="IntAct" id="P51582">
    <property type="interactions" value="2"/>
</dbReference>
<dbReference type="STRING" id="9606.ENSP00000363643"/>
<dbReference type="BindingDB" id="P51582"/>
<dbReference type="ChEMBL" id="CHEMBL2123"/>
<dbReference type="DrugBank" id="DB02431">
    <property type="generic name" value="Cytidine-5'-Triphosphate"/>
</dbReference>
<dbReference type="DrugBank" id="DB01069">
    <property type="generic name" value="Promethazine"/>
</dbReference>
<dbReference type="DrugBank" id="DB04005">
    <property type="generic name" value="Uridine 5'-triphosphate"/>
</dbReference>
<dbReference type="DrugCentral" id="P51582"/>
<dbReference type="GuidetoPHARMACOLOGY" id="325"/>
<dbReference type="iPTMnet" id="P51582"/>
<dbReference type="PhosphoSitePlus" id="P51582"/>
<dbReference type="BioMuta" id="P2RY4"/>
<dbReference type="DMDM" id="1709524"/>
<dbReference type="MassIVE" id="P51582"/>
<dbReference type="PaxDb" id="9606-ENSP00000363643"/>
<dbReference type="PeptideAtlas" id="P51582"/>
<dbReference type="Antibodypedia" id="13260">
    <property type="antibodies" value="275 antibodies from 28 providers"/>
</dbReference>
<dbReference type="DNASU" id="5030"/>
<dbReference type="Ensembl" id="ENST00000374519.4">
    <property type="protein sequence ID" value="ENSP00000363643.2"/>
    <property type="gene ID" value="ENSG00000186912.7"/>
</dbReference>
<dbReference type="GeneID" id="5030"/>
<dbReference type="KEGG" id="hsa:5030"/>
<dbReference type="MANE-Select" id="ENST00000374519.4">
    <property type="protein sequence ID" value="ENSP00000363643.2"/>
    <property type="RefSeq nucleotide sequence ID" value="NM_002565.4"/>
    <property type="RefSeq protein sequence ID" value="NP_002556.1"/>
</dbReference>
<dbReference type="UCSC" id="uc004dxz.2">
    <property type="organism name" value="human"/>
</dbReference>
<dbReference type="AGR" id="HGNC:8542"/>
<dbReference type="CTD" id="5030"/>
<dbReference type="DisGeNET" id="5030"/>
<dbReference type="GeneCards" id="P2RY4"/>
<dbReference type="HGNC" id="HGNC:8542">
    <property type="gene designation" value="P2RY4"/>
</dbReference>
<dbReference type="HPA" id="ENSG00000186912">
    <property type="expression patterns" value="Tissue enhanced (intestine)"/>
</dbReference>
<dbReference type="MIM" id="300038">
    <property type="type" value="gene"/>
</dbReference>
<dbReference type="neXtProt" id="NX_P51582"/>
<dbReference type="OpenTargets" id="ENSG00000186912"/>
<dbReference type="PharmGKB" id="PA32871"/>
<dbReference type="VEuPathDB" id="HostDB:ENSG00000186912"/>
<dbReference type="eggNOG" id="ENOG502QSTF">
    <property type="taxonomic scope" value="Eukaryota"/>
</dbReference>
<dbReference type="GeneTree" id="ENSGT01030000234621"/>
<dbReference type="HOGENOM" id="CLU_009579_8_2_1"/>
<dbReference type="InParanoid" id="P51582"/>
<dbReference type="OMA" id="TRTIYYM"/>
<dbReference type="OrthoDB" id="10018446at2759"/>
<dbReference type="PAN-GO" id="P51582">
    <property type="GO annotations" value="3 GO annotations based on evolutionary models"/>
</dbReference>
<dbReference type="PhylomeDB" id="P51582"/>
<dbReference type="TreeFam" id="TF350009"/>
<dbReference type="PathwayCommons" id="P51582"/>
<dbReference type="Reactome" id="R-HSA-417957">
    <property type="pathway name" value="P2Y receptors"/>
</dbReference>
<dbReference type="Reactome" id="R-HSA-418594">
    <property type="pathway name" value="G alpha (i) signalling events"/>
</dbReference>
<dbReference type="SignaLink" id="P51582"/>
<dbReference type="SIGNOR" id="P51582"/>
<dbReference type="BioGRID-ORCS" id="5030">
    <property type="hits" value="14 hits in 764 CRISPR screens"/>
</dbReference>
<dbReference type="GeneWiki" id="P2RY4"/>
<dbReference type="GenomeRNAi" id="5030"/>
<dbReference type="Pharos" id="P51582">
    <property type="development level" value="Tchem"/>
</dbReference>
<dbReference type="PRO" id="PR:P51582"/>
<dbReference type="Proteomes" id="UP000005640">
    <property type="component" value="Chromosome X"/>
</dbReference>
<dbReference type="RNAct" id="P51582">
    <property type="molecule type" value="protein"/>
</dbReference>
<dbReference type="Bgee" id="ENSG00000186912">
    <property type="expression patterns" value="Expressed in tibialis anterior and 52 other cell types or tissues"/>
</dbReference>
<dbReference type="GO" id="GO:0005886">
    <property type="term" value="C:plasma membrane"/>
    <property type="evidence" value="ECO:0000318"/>
    <property type="project" value="GO_Central"/>
</dbReference>
<dbReference type="GO" id="GO:0045028">
    <property type="term" value="F:G protein-coupled purinergic nucleotide receptor activity"/>
    <property type="evidence" value="ECO:0007669"/>
    <property type="project" value="InterPro"/>
</dbReference>
<dbReference type="GO" id="GO:0045030">
    <property type="term" value="F:G protein-coupled UTP receptor activity"/>
    <property type="evidence" value="ECO:0000318"/>
    <property type="project" value="GO_Central"/>
</dbReference>
<dbReference type="GO" id="GO:0071318">
    <property type="term" value="P:cellular response to ATP"/>
    <property type="evidence" value="ECO:0000304"/>
    <property type="project" value="ARUK-UCL"/>
</dbReference>
<dbReference type="GO" id="GO:0071380">
    <property type="term" value="P:cellular response to prostaglandin E stimulus"/>
    <property type="evidence" value="ECO:0007669"/>
    <property type="project" value="Ensembl"/>
</dbReference>
<dbReference type="GO" id="GO:0007186">
    <property type="term" value="P:G protein-coupled receptor signaling pathway"/>
    <property type="evidence" value="ECO:0000318"/>
    <property type="project" value="GO_Central"/>
</dbReference>
<dbReference type="GO" id="GO:0007200">
    <property type="term" value="P:phospholipase C-activating G protein-coupled receptor signaling pathway"/>
    <property type="evidence" value="ECO:0000304"/>
    <property type="project" value="ProtInc"/>
</dbReference>
<dbReference type="GO" id="GO:0007204">
    <property type="term" value="P:positive regulation of cytosolic calcium ion concentration"/>
    <property type="evidence" value="ECO:0000304"/>
    <property type="project" value="ProtInc"/>
</dbReference>
<dbReference type="GO" id="GO:0030321">
    <property type="term" value="P:transepithelial chloride transport"/>
    <property type="evidence" value="ECO:0007669"/>
    <property type="project" value="Ensembl"/>
</dbReference>
<dbReference type="CDD" id="cd15374">
    <property type="entry name" value="7tmA_P2Y4"/>
    <property type="match status" value="1"/>
</dbReference>
<dbReference type="FunFam" id="1.20.1070.10:FF:000017">
    <property type="entry name" value="lysophosphatidic acid receptor 4"/>
    <property type="match status" value="1"/>
</dbReference>
<dbReference type="Gene3D" id="1.20.1070.10">
    <property type="entry name" value="Rhodopsin 7-helix transmembrane proteins"/>
    <property type="match status" value="1"/>
</dbReference>
<dbReference type="InterPro" id="IPR000276">
    <property type="entry name" value="GPCR_Rhodpsn"/>
</dbReference>
<dbReference type="InterPro" id="IPR017452">
    <property type="entry name" value="GPCR_Rhodpsn_7TM"/>
</dbReference>
<dbReference type="InterPro" id="IPR000018">
    <property type="entry name" value="P2Y4"/>
</dbReference>
<dbReference type="PANTHER" id="PTHR24231:SF21">
    <property type="entry name" value="P2Y PURINOCEPTOR 4"/>
    <property type="match status" value="1"/>
</dbReference>
<dbReference type="PANTHER" id="PTHR24231">
    <property type="entry name" value="PURINOCEPTOR-RELATED G-PROTEIN COUPLED RECEPTOR"/>
    <property type="match status" value="1"/>
</dbReference>
<dbReference type="Pfam" id="PF00001">
    <property type="entry name" value="7tm_1"/>
    <property type="match status" value="1"/>
</dbReference>
<dbReference type="PRINTS" id="PR00237">
    <property type="entry name" value="GPCRRHODOPSN"/>
</dbReference>
<dbReference type="PRINTS" id="PR01066">
    <property type="entry name" value="P2Y4PRNOCPTR"/>
</dbReference>
<dbReference type="PRINTS" id="PR01157">
    <property type="entry name" value="P2YPURNOCPTR"/>
</dbReference>
<dbReference type="SUPFAM" id="SSF81321">
    <property type="entry name" value="Family A G protein-coupled receptor-like"/>
    <property type="match status" value="1"/>
</dbReference>
<dbReference type="PROSITE" id="PS00237">
    <property type="entry name" value="G_PROTEIN_RECEP_F1_1"/>
    <property type="match status" value="1"/>
</dbReference>
<dbReference type="PROSITE" id="PS50262">
    <property type="entry name" value="G_PROTEIN_RECEP_F1_2"/>
    <property type="match status" value="1"/>
</dbReference>
<reference key="1">
    <citation type="journal article" date="1995" name="J. Biol. Chem.">
        <title>Cloning and functional expression of a human uridine nucleotide receptor.</title>
        <authorList>
            <person name="Communi D."/>
            <person name="Pirotton S."/>
            <person name="Parmentier M."/>
            <person name="Boeynaems J.-M."/>
        </authorList>
    </citation>
    <scope>NUCLEOTIDE SEQUENCE [GENOMIC DNA]</scope>
</reference>
<reference key="2">
    <citation type="journal article" date="1995" name="J. Biol. Chem.">
        <title>Cloning, expression, and chromosomal localization of the human uridine nucleotide receptor gene.</title>
        <authorList>
            <person name="Nguyen T."/>
            <person name="Erb L."/>
            <person name="Weisman G.A."/>
            <person name="Marchese A."/>
            <person name="Heng H.H.Q."/>
            <person name="Garrad R.C."/>
            <person name="George S.R."/>
            <person name="Turner J.T."/>
            <person name="O'Dowd B.F."/>
        </authorList>
    </citation>
    <scope>NUCLEOTIDE SEQUENCE [GENOMIC DNA]</scope>
    <scope>VARIANTS THR-178 AND ALA-234</scope>
</reference>
<reference key="3">
    <citation type="journal article" date="1996" name="FEBS Lett.">
        <title>Molecular cloning and characterization of a novel orphan receptor (P2P) expressed in human pancreas that shows high structural homology to the P2U purinoceptor.</title>
        <authorList>
            <person name="Stam N.J."/>
            <person name="Klomp J."/>
            <person name="van der Heuvel M."/>
            <person name="Olijve W."/>
        </authorList>
    </citation>
    <scope>NUCLEOTIDE SEQUENCE [GENOMIC DNA]</scope>
    <source>
        <tissue>Pancreas</tissue>
    </source>
</reference>
<reference key="4">
    <citation type="journal article" date="2005" name="Nature">
        <title>The DNA sequence of the human X chromosome.</title>
        <authorList>
            <person name="Ross M.T."/>
            <person name="Grafham D.V."/>
            <person name="Coffey A.J."/>
            <person name="Scherer S."/>
            <person name="McLay K."/>
            <person name="Muzny D."/>
            <person name="Platzer M."/>
            <person name="Howell G.R."/>
            <person name="Burrows C."/>
            <person name="Bird C.P."/>
            <person name="Frankish A."/>
            <person name="Lovell F.L."/>
            <person name="Howe K.L."/>
            <person name="Ashurst J.L."/>
            <person name="Fulton R.S."/>
            <person name="Sudbrak R."/>
            <person name="Wen G."/>
            <person name="Jones M.C."/>
            <person name="Hurles M.E."/>
            <person name="Andrews T.D."/>
            <person name="Scott C.E."/>
            <person name="Searle S."/>
            <person name="Ramser J."/>
            <person name="Whittaker A."/>
            <person name="Deadman R."/>
            <person name="Carter N.P."/>
            <person name="Hunt S.E."/>
            <person name="Chen R."/>
            <person name="Cree A."/>
            <person name="Gunaratne P."/>
            <person name="Havlak P."/>
            <person name="Hodgson A."/>
            <person name="Metzker M.L."/>
            <person name="Richards S."/>
            <person name="Scott G."/>
            <person name="Steffen D."/>
            <person name="Sodergren E."/>
            <person name="Wheeler D.A."/>
            <person name="Worley K.C."/>
            <person name="Ainscough R."/>
            <person name="Ambrose K.D."/>
            <person name="Ansari-Lari M.A."/>
            <person name="Aradhya S."/>
            <person name="Ashwell R.I."/>
            <person name="Babbage A.K."/>
            <person name="Bagguley C.L."/>
            <person name="Ballabio A."/>
            <person name="Banerjee R."/>
            <person name="Barker G.E."/>
            <person name="Barlow K.F."/>
            <person name="Barrett I.P."/>
            <person name="Bates K.N."/>
            <person name="Beare D.M."/>
            <person name="Beasley H."/>
            <person name="Beasley O."/>
            <person name="Beck A."/>
            <person name="Bethel G."/>
            <person name="Blechschmidt K."/>
            <person name="Brady N."/>
            <person name="Bray-Allen S."/>
            <person name="Bridgeman A.M."/>
            <person name="Brown A.J."/>
            <person name="Brown M.J."/>
            <person name="Bonnin D."/>
            <person name="Bruford E.A."/>
            <person name="Buhay C."/>
            <person name="Burch P."/>
            <person name="Burford D."/>
            <person name="Burgess J."/>
            <person name="Burrill W."/>
            <person name="Burton J."/>
            <person name="Bye J.M."/>
            <person name="Carder C."/>
            <person name="Carrel L."/>
            <person name="Chako J."/>
            <person name="Chapman J.C."/>
            <person name="Chavez D."/>
            <person name="Chen E."/>
            <person name="Chen G."/>
            <person name="Chen Y."/>
            <person name="Chen Z."/>
            <person name="Chinault C."/>
            <person name="Ciccodicola A."/>
            <person name="Clark S.Y."/>
            <person name="Clarke G."/>
            <person name="Clee C.M."/>
            <person name="Clegg S."/>
            <person name="Clerc-Blankenburg K."/>
            <person name="Clifford K."/>
            <person name="Cobley V."/>
            <person name="Cole C.G."/>
            <person name="Conquer J.S."/>
            <person name="Corby N."/>
            <person name="Connor R.E."/>
            <person name="David R."/>
            <person name="Davies J."/>
            <person name="Davis C."/>
            <person name="Davis J."/>
            <person name="Delgado O."/>
            <person name="Deshazo D."/>
            <person name="Dhami P."/>
            <person name="Ding Y."/>
            <person name="Dinh H."/>
            <person name="Dodsworth S."/>
            <person name="Draper H."/>
            <person name="Dugan-Rocha S."/>
            <person name="Dunham A."/>
            <person name="Dunn M."/>
            <person name="Durbin K.J."/>
            <person name="Dutta I."/>
            <person name="Eades T."/>
            <person name="Ellwood M."/>
            <person name="Emery-Cohen A."/>
            <person name="Errington H."/>
            <person name="Evans K.L."/>
            <person name="Faulkner L."/>
            <person name="Francis F."/>
            <person name="Frankland J."/>
            <person name="Fraser A.E."/>
            <person name="Galgoczy P."/>
            <person name="Gilbert J."/>
            <person name="Gill R."/>
            <person name="Gloeckner G."/>
            <person name="Gregory S.G."/>
            <person name="Gribble S."/>
            <person name="Griffiths C."/>
            <person name="Grocock R."/>
            <person name="Gu Y."/>
            <person name="Gwilliam R."/>
            <person name="Hamilton C."/>
            <person name="Hart E.A."/>
            <person name="Hawes A."/>
            <person name="Heath P.D."/>
            <person name="Heitmann K."/>
            <person name="Hennig S."/>
            <person name="Hernandez J."/>
            <person name="Hinzmann B."/>
            <person name="Ho S."/>
            <person name="Hoffs M."/>
            <person name="Howden P.J."/>
            <person name="Huckle E.J."/>
            <person name="Hume J."/>
            <person name="Hunt P.J."/>
            <person name="Hunt A.R."/>
            <person name="Isherwood J."/>
            <person name="Jacob L."/>
            <person name="Johnson D."/>
            <person name="Jones S."/>
            <person name="de Jong P.J."/>
            <person name="Joseph S.S."/>
            <person name="Keenan S."/>
            <person name="Kelly S."/>
            <person name="Kershaw J.K."/>
            <person name="Khan Z."/>
            <person name="Kioschis P."/>
            <person name="Klages S."/>
            <person name="Knights A.J."/>
            <person name="Kosiura A."/>
            <person name="Kovar-Smith C."/>
            <person name="Laird G.K."/>
            <person name="Langford C."/>
            <person name="Lawlor S."/>
            <person name="Leversha M."/>
            <person name="Lewis L."/>
            <person name="Liu W."/>
            <person name="Lloyd C."/>
            <person name="Lloyd D.M."/>
            <person name="Loulseged H."/>
            <person name="Loveland J.E."/>
            <person name="Lovell J.D."/>
            <person name="Lozado R."/>
            <person name="Lu J."/>
            <person name="Lyne R."/>
            <person name="Ma J."/>
            <person name="Maheshwari M."/>
            <person name="Matthews L.H."/>
            <person name="McDowall J."/>
            <person name="McLaren S."/>
            <person name="McMurray A."/>
            <person name="Meidl P."/>
            <person name="Meitinger T."/>
            <person name="Milne S."/>
            <person name="Miner G."/>
            <person name="Mistry S.L."/>
            <person name="Morgan M."/>
            <person name="Morris S."/>
            <person name="Mueller I."/>
            <person name="Mullikin J.C."/>
            <person name="Nguyen N."/>
            <person name="Nordsiek G."/>
            <person name="Nyakatura G."/>
            <person name="O'dell C.N."/>
            <person name="Okwuonu G."/>
            <person name="Palmer S."/>
            <person name="Pandian R."/>
            <person name="Parker D."/>
            <person name="Parrish J."/>
            <person name="Pasternak S."/>
            <person name="Patel D."/>
            <person name="Pearce A.V."/>
            <person name="Pearson D.M."/>
            <person name="Pelan S.E."/>
            <person name="Perez L."/>
            <person name="Porter K.M."/>
            <person name="Ramsey Y."/>
            <person name="Reichwald K."/>
            <person name="Rhodes S."/>
            <person name="Ridler K.A."/>
            <person name="Schlessinger D."/>
            <person name="Schueler M.G."/>
            <person name="Sehra H.K."/>
            <person name="Shaw-Smith C."/>
            <person name="Shen H."/>
            <person name="Sheridan E.M."/>
            <person name="Shownkeen R."/>
            <person name="Skuce C.D."/>
            <person name="Smith M.L."/>
            <person name="Sotheran E.C."/>
            <person name="Steingruber H.E."/>
            <person name="Steward C.A."/>
            <person name="Storey R."/>
            <person name="Swann R.M."/>
            <person name="Swarbreck D."/>
            <person name="Tabor P.E."/>
            <person name="Taudien S."/>
            <person name="Taylor T."/>
            <person name="Teague B."/>
            <person name="Thomas K."/>
            <person name="Thorpe A."/>
            <person name="Timms K."/>
            <person name="Tracey A."/>
            <person name="Trevanion S."/>
            <person name="Tromans A.C."/>
            <person name="d'Urso M."/>
            <person name="Verduzco D."/>
            <person name="Villasana D."/>
            <person name="Waldron L."/>
            <person name="Wall M."/>
            <person name="Wang Q."/>
            <person name="Warren J."/>
            <person name="Warry G.L."/>
            <person name="Wei X."/>
            <person name="West A."/>
            <person name="Whitehead S.L."/>
            <person name="Whiteley M.N."/>
            <person name="Wilkinson J.E."/>
            <person name="Willey D.L."/>
            <person name="Williams G."/>
            <person name="Williams L."/>
            <person name="Williamson A."/>
            <person name="Williamson H."/>
            <person name="Wilming L."/>
            <person name="Woodmansey R.L."/>
            <person name="Wray P.W."/>
            <person name="Yen J."/>
            <person name="Zhang J."/>
            <person name="Zhou J."/>
            <person name="Zoghbi H."/>
            <person name="Zorilla S."/>
            <person name="Buck D."/>
            <person name="Reinhardt R."/>
            <person name="Poustka A."/>
            <person name="Rosenthal A."/>
            <person name="Lehrach H."/>
            <person name="Meindl A."/>
            <person name="Minx P.J."/>
            <person name="Hillier L.W."/>
            <person name="Willard H.F."/>
            <person name="Wilson R.K."/>
            <person name="Waterston R.H."/>
            <person name="Rice C.M."/>
            <person name="Vaudin M."/>
            <person name="Coulson A."/>
            <person name="Nelson D.L."/>
            <person name="Weinstock G."/>
            <person name="Sulston J.E."/>
            <person name="Durbin R.M."/>
            <person name="Hubbard T."/>
            <person name="Gibbs R.A."/>
            <person name="Beck S."/>
            <person name="Rogers J."/>
            <person name="Bentley D.R."/>
        </authorList>
    </citation>
    <scope>NUCLEOTIDE SEQUENCE [LARGE SCALE GENOMIC DNA]</scope>
</reference>
<reference key="5">
    <citation type="journal article" date="2004" name="Genome Res.">
        <title>The status, quality, and expansion of the NIH full-length cDNA project: the Mammalian Gene Collection (MGC).</title>
        <authorList>
            <consortium name="The MGC Project Team"/>
        </authorList>
    </citation>
    <scope>NUCLEOTIDE SEQUENCE [LARGE SCALE MRNA]</scope>
    <scope>VARIANT THR-178</scope>
</reference>
<reference key="6">
    <citation type="journal article" date="2001" name="J. Biol. Chem.">
        <title>Differential regulation of the uridine nucleotide-activated P2Y4 and P2Y6 receptors. Ser-333 and Ser-334 in the carboxyl terminus are involved in agonist-dependent phosphorylation desensitization and internalization of the P2Y4 receptor.</title>
        <authorList>
            <person name="Brinson A.E."/>
            <person name="Harden T.K."/>
        </authorList>
    </citation>
    <scope>PHOSPHORYLATION AT SER-333 AND SER-334</scope>
    <scope>MUTAGENESIS OF SER-243; SER-333; SER-334 AND SER-339</scope>
</reference>
<feature type="chain" id="PRO_0000070020" description="P2Y purinoceptor 4">
    <location>
        <begin position="1"/>
        <end position="365"/>
    </location>
</feature>
<feature type="topological domain" description="Extracellular" evidence="1">
    <location>
        <begin position="1"/>
        <end position="34"/>
    </location>
</feature>
<feature type="transmembrane region" description="Helical; Name=1" evidence="1">
    <location>
        <begin position="35"/>
        <end position="61"/>
    </location>
</feature>
<feature type="topological domain" description="Cytoplasmic" evidence="1">
    <location>
        <begin position="62"/>
        <end position="72"/>
    </location>
</feature>
<feature type="transmembrane region" description="Helical; Name=2" evidence="1">
    <location>
        <begin position="73"/>
        <end position="95"/>
    </location>
</feature>
<feature type="topological domain" description="Extracellular" evidence="1">
    <location>
        <begin position="96"/>
        <end position="112"/>
    </location>
</feature>
<feature type="transmembrane region" description="Helical; Name=3" evidence="1">
    <location>
        <begin position="113"/>
        <end position="131"/>
    </location>
</feature>
<feature type="topological domain" description="Cytoplasmic" evidence="1">
    <location>
        <begin position="132"/>
        <end position="154"/>
    </location>
</feature>
<feature type="transmembrane region" description="Helical; Name=4" evidence="1">
    <location>
        <begin position="155"/>
        <end position="174"/>
    </location>
</feature>
<feature type="topological domain" description="Extracellular" evidence="1">
    <location>
        <begin position="175"/>
        <end position="196"/>
    </location>
</feature>
<feature type="transmembrane region" description="Helical; Name=5" evidence="1">
    <location>
        <begin position="197"/>
        <end position="222"/>
    </location>
</feature>
<feature type="topological domain" description="Cytoplasmic" evidence="1">
    <location>
        <begin position="223"/>
        <end position="246"/>
    </location>
</feature>
<feature type="transmembrane region" description="Helical; Name=6" evidence="1">
    <location>
        <begin position="247"/>
        <end position="269"/>
    </location>
</feature>
<feature type="topological domain" description="Extracellular" evidence="1">
    <location>
        <begin position="270"/>
        <end position="287"/>
    </location>
</feature>
<feature type="transmembrane region" description="Helical; Name=7" evidence="1">
    <location>
        <begin position="288"/>
        <end position="309"/>
    </location>
</feature>
<feature type="topological domain" description="Cytoplasmic" evidence="1">
    <location>
        <begin position="310"/>
        <end position="365"/>
    </location>
</feature>
<feature type="modified residue" description="Phosphoserine" evidence="7">
    <location>
        <position position="333"/>
    </location>
</feature>
<feature type="modified residue" description="Phosphoserine" evidence="7">
    <location>
        <position position="334"/>
    </location>
</feature>
<feature type="disulfide bond" evidence="2">
    <location>
        <begin position="108"/>
        <end position="185"/>
    </location>
</feature>
<feature type="sequence variant" id="VAR_011854" description="In dbSNP:rs1152186.">
    <original>V</original>
    <variation>M</variation>
    <location>
        <position position="168"/>
    </location>
</feature>
<feature type="sequence variant" id="VAR_011855" description="In dbSNP:rs1152187." evidence="4 5">
    <original>N</original>
    <variation>T</variation>
    <location>
        <position position="178"/>
    </location>
</feature>
<feature type="sequence variant" id="VAR_011856" description="In dbSNP:rs1152188.">
    <original>P</original>
    <variation>L</variation>
    <location>
        <position position="191"/>
    </location>
</feature>
<feature type="sequence variant" id="VAR_049429" description="In dbSNP:rs3829709." evidence="5">
    <original>S</original>
    <variation>A</variation>
    <location>
        <position position="234"/>
    </location>
</feature>
<feature type="mutagenesis site" description="No effect." evidence="3">
    <original>S</original>
    <variation>A</variation>
    <location>
        <position position="243"/>
    </location>
</feature>
<feature type="mutagenesis site" description="Abolishes agonist-induced phosphorylation. Prevents agonist-induced desensitization and loss of cell surface receptors.">
    <location>
        <begin position="333"/>
        <end position="365"/>
    </location>
</feature>
<feature type="mutagenesis site" description="Greatly reduces agonist-induced desensitization and loss of cell surface receptors.">
    <original>SSLALVSLPEDSSCRWAATPQDSSCST</original>
    <variation>AALALVALPEDAACRWAAAPQDAACAA</variation>
    <location>
        <begin position="333"/>
        <end position="359"/>
    </location>
</feature>
<feature type="mutagenesis site" description="Greatly reduces agonist-induced desensitization and loss of cell surface receptors; when associated with A-334 and A-339." evidence="3">
    <original>S</original>
    <variation>A</variation>
    <location>
        <position position="333"/>
    </location>
</feature>
<feature type="mutagenesis site" description="Greatly reduces agonist-induced desensitization and loss of cell surface receptors; when associated with A-333 and A-339." evidence="3">
    <original>S</original>
    <variation>A</variation>
    <location>
        <position position="334"/>
    </location>
</feature>
<feature type="mutagenesis site" description="Greatly reduces agonist-induced desensitization and loss of cell surface receptors; when associated with A-333 and A-334." evidence="3">
    <original>S</original>
    <variation>A</variation>
    <location>
        <position position="339"/>
    </location>
</feature>
<feature type="mutagenesis site" description="No effect on agonist-induced phosphorylation, no functional effect.">
    <location>
        <begin position="344"/>
        <end position="365"/>
    </location>
</feature>
<feature type="mutagenesis site" description="No functional effect.">
    <location>
        <begin position="356"/>
        <end position="365"/>
    </location>
</feature>
<feature type="sequence conflict" description="In Ref. 2; AAC50347." evidence="6" ref="2">
    <original>L</original>
    <variation>V</variation>
    <location>
        <position position="86"/>
    </location>
</feature>
<feature type="sequence conflict" description="In Ref. 5; AAH96068." evidence="6" ref="5">
    <original>C</original>
    <variation>S</variation>
    <location>
        <position position="121"/>
    </location>
</feature>
<feature type="sequence conflict" description="In Ref. 5; AAH96069." evidence="6" ref="5">
    <original>I</original>
    <variation>V</variation>
    <location>
        <position position="247"/>
    </location>
</feature>
<feature type="sequence conflict" description="In Ref. 5; AAH96069." evidence="6" ref="5">
    <original>P</original>
    <variation>T</variation>
    <location>
        <position position="352"/>
    </location>
</feature>
<sequence>MASTESSLLRSLGLSPGPGSSEVELDCWFDEDFKFILLPVSYAVVFVLGLGLNAPTLWLFIFRLRPWDATATYMFHLALSDTLYVLSLPTLIYYYAAHNHWPFGTEICKFVRFLFYWNLYCSVLFLTCISVHRYLGICHPLRALRWGRPRLAGLLCLAVWLVVAGCLVPNLFFVTTSNKGTTVLCHDTTRPEEFDHYVHFSSAVMGLLFGVPCLVTLVCYGLMARRLYQPLPGSAQSSSRLRSLRTIAVVLTVFAVCFVPFHITRTIYYLARLLEADCRVLNIVNVVYKVTRPLASANSCLDPVLYLLTGDKYRRQLRQLCGGGKPQPRTAASSLALVSLPEDSSCRWAATPQDSSCSTPRADRL</sequence>
<name>P2RY4_HUMAN</name>
<keyword id="KW-1003">Cell membrane</keyword>
<keyword id="KW-1015">Disulfide bond</keyword>
<keyword id="KW-0297">G-protein coupled receptor</keyword>
<keyword id="KW-0472">Membrane</keyword>
<keyword id="KW-0597">Phosphoprotein</keyword>
<keyword id="KW-1267">Proteomics identification</keyword>
<keyword id="KW-0675">Receptor</keyword>
<keyword id="KW-1185">Reference proteome</keyword>
<keyword id="KW-0807">Transducer</keyword>
<keyword id="KW-0812">Transmembrane</keyword>
<keyword id="KW-1133">Transmembrane helix</keyword>
<organism>
    <name type="scientific">Homo sapiens</name>
    <name type="common">Human</name>
    <dbReference type="NCBI Taxonomy" id="9606"/>
    <lineage>
        <taxon>Eukaryota</taxon>
        <taxon>Metazoa</taxon>
        <taxon>Chordata</taxon>
        <taxon>Craniata</taxon>
        <taxon>Vertebrata</taxon>
        <taxon>Euteleostomi</taxon>
        <taxon>Mammalia</taxon>
        <taxon>Eutheria</taxon>
        <taxon>Euarchontoglires</taxon>
        <taxon>Primates</taxon>
        <taxon>Haplorrhini</taxon>
        <taxon>Catarrhini</taxon>
        <taxon>Hominidae</taxon>
        <taxon>Homo</taxon>
    </lineage>
</organism>
<evidence type="ECO:0000255" key="1"/>
<evidence type="ECO:0000255" key="2">
    <source>
        <dbReference type="PROSITE-ProRule" id="PRU00521"/>
    </source>
</evidence>
<evidence type="ECO:0000269" key="3">
    <source>
    </source>
</evidence>
<evidence type="ECO:0000269" key="4">
    <source>
    </source>
</evidence>
<evidence type="ECO:0000269" key="5">
    <source>
    </source>
</evidence>
<evidence type="ECO:0000305" key="6"/>
<evidence type="ECO:0000305" key="7">
    <source>
    </source>
</evidence>